<organism>
    <name type="scientific">Saccharophagus degradans (strain 2-40 / ATCC 43961 / DSM 17024)</name>
    <dbReference type="NCBI Taxonomy" id="203122"/>
    <lineage>
        <taxon>Bacteria</taxon>
        <taxon>Pseudomonadati</taxon>
        <taxon>Pseudomonadota</taxon>
        <taxon>Gammaproteobacteria</taxon>
        <taxon>Cellvibrionales</taxon>
        <taxon>Cellvibrionaceae</taxon>
        <taxon>Saccharophagus</taxon>
    </lineage>
</organism>
<reference key="1">
    <citation type="journal article" date="2008" name="PLoS Genet.">
        <title>Complete genome sequence of the complex carbohydrate-degrading marine bacterium, Saccharophagus degradans strain 2-40 T.</title>
        <authorList>
            <person name="Weiner R.M."/>
            <person name="Taylor L.E. II"/>
            <person name="Henrissat B."/>
            <person name="Hauser L."/>
            <person name="Land M."/>
            <person name="Coutinho P.M."/>
            <person name="Rancurel C."/>
            <person name="Saunders E.H."/>
            <person name="Longmire A.G."/>
            <person name="Zhang H."/>
            <person name="Bayer E.A."/>
            <person name="Gilbert H.J."/>
            <person name="Larimer F."/>
            <person name="Zhulin I.B."/>
            <person name="Ekborg N.A."/>
            <person name="Lamed R."/>
            <person name="Richardson P.M."/>
            <person name="Borovok I."/>
            <person name="Hutcheson S."/>
        </authorList>
    </citation>
    <scope>NUCLEOTIDE SEQUENCE [LARGE SCALE GENOMIC DNA]</scope>
    <source>
        <strain>2-40 / ATCC 43961 / DSM 17024</strain>
    </source>
</reference>
<feature type="chain" id="PRO_0000252934" description="Fluoride-specific ion channel FluC">
    <location>
        <begin position="1"/>
        <end position="133"/>
    </location>
</feature>
<feature type="transmembrane region" description="Helical" evidence="1">
    <location>
        <begin position="5"/>
        <end position="25"/>
    </location>
</feature>
<feature type="transmembrane region" description="Helical" evidence="1">
    <location>
        <begin position="43"/>
        <end position="63"/>
    </location>
</feature>
<feature type="transmembrane region" description="Helical" evidence="1">
    <location>
        <begin position="76"/>
        <end position="96"/>
    </location>
</feature>
<feature type="transmembrane region" description="Helical" evidence="1">
    <location>
        <begin position="108"/>
        <end position="128"/>
    </location>
</feature>
<feature type="binding site" evidence="1">
    <location>
        <position position="83"/>
    </location>
    <ligand>
        <name>Na(+)</name>
        <dbReference type="ChEBI" id="CHEBI:29101"/>
        <note>structural</note>
    </ligand>
</feature>
<feature type="binding site" evidence="1">
    <location>
        <position position="86"/>
    </location>
    <ligand>
        <name>Na(+)</name>
        <dbReference type="ChEBI" id="CHEBI:29101"/>
        <note>structural</note>
    </ligand>
</feature>
<proteinExistence type="inferred from homology"/>
<name>FLUC_SACD2</name>
<gene>
    <name evidence="1" type="primary">fluC</name>
    <name evidence="1" type="synonym">crcB</name>
    <name type="ordered locus">Sde_1696</name>
</gene>
<evidence type="ECO:0000255" key="1">
    <source>
        <dbReference type="HAMAP-Rule" id="MF_00454"/>
    </source>
</evidence>
<evidence type="ECO:0000305" key="2"/>
<comment type="function">
    <text evidence="1">Fluoride-specific ion channel. Important for reducing fluoride concentration in the cell, thus reducing its toxicity.</text>
</comment>
<comment type="catalytic activity">
    <reaction evidence="1">
        <text>fluoride(in) = fluoride(out)</text>
        <dbReference type="Rhea" id="RHEA:76159"/>
        <dbReference type="ChEBI" id="CHEBI:17051"/>
    </reaction>
    <physiologicalReaction direction="left-to-right" evidence="1">
        <dbReference type="Rhea" id="RHEA:76160"/>
    </physiologicalReaction>
</comment>
<comment type="activity regulation">
    <text evidence="1">Na(+) is not transported, but it plays an essential structural role and its presence is essential for fluoride channel function.</text>
</comment>
<comment type="subcellular location">
    <subcellularLocation>
        <location evidence="1">Cell inner membrane</location>
        <topology evidence="1">Multi-pass membrane protein</topology>
    </subcellularLocation>
</comment>
<comment type="similarity">
    <text evidence="1">Belongs to the fluoride channel Fluc/FEX (TC 1.A.43) family.</text>
</comment>
<comment type="sequence caution" evidence="2">
    <conflict type="erroneous initiation">
        <sequence resource="EMBL-CDS" id="ABD80956"/>
    </conflict>
</comment>
<accession>Q21K23</accession>
<protein>
    <recommendedName>
        <fullName evidence="1">Fluoride-specific ion channel FluC</fullName>
    </recommendedName>
</protein>
<sequence>MTSAVPATSLILWLAVALGGALGALARYSVSIAWMPAQLKFPVATLTVNVLGSFLMGVFYVVIVEKAMLAPVWRHVIMIGFLGAFTTFSTFSIESLHLWQSGHWQIAISYVVANVVLSISAVVVAIVLTEKLV</sequence>
<keyword id="KW-0997">Cell inner membrane</keyword>
<keyword id="KW-1003">Cell membrane</keyword>
<keyword id="KW-0407">Ion channel</keyword>
<keyword id="KW-0406">Ion transport</keyword>
<keyword id="KW-0472">Membrane</keyword>
<keyword id="KW-0479">Metal-binding</keyword>
<keyword id="KW-1185">Reference proteome</keyword>
<keyword id="KW-0915">Sodium</keyword>
<keyword id="KW-0812">Transmembrane</keyword>
<keyword id="KW-1133">Transmembrane helix</keyword>
<keyword id="KW-0813">Transport</keyword>
<dbReference type="EMBL" id="CP000282">
    <property type="protein sequence ID" value="ABD80956.1"/>
    <property type="status" value="ALT_INIT"/>
    <property type="molecule type" value="Genomic_DNA"/>
</dbReference>
<dbReference type="RefSeq" id="WP_049762607.1">
    <property type="nucleotide sequence ID" value="NC_007912.1"/>
</dbReference>
<dbReference type="SMR" id="Q21K23"/>
<dbReference type="STRING" id="203122.Sde_1696"/>
<dbReference type="GeneID" id="98613371"/>
<dbReference type="KEGG" id="sde:Sde_1696"/>
<dbReference type="eggNOG" id="COG0239">
    <property type="taxonomic scope" value="Bacteria"/>
</dbReference>
<dbReference type="HOGENOM" id="CLU_114342_3_0_6"/>
<dbReference type="Proteomes" id="UP000001947">
    <property type="component" value="Chromosome"/>
</dbReference>
<dbReference type="GO" id="GO:0005886">
    <property type="term" value="C:plasma membrane"/>
    <property type="evidence" value="ECO:0007669"/>
    <property type="project" value="UniProtKB-SubCell"/>
</dbReference>
<dbReference type="GO" id="GO:0062054">
    <property type="term" value="F:fluoride channel activity"/>
    <property type="evidence" value="ECO:0007669"/>
    <property type="project" value="UniProtKB-UniRule"/>
</dbReference>
<dbReference type="GO" id="GO:0046872">
    <property type="term" value="F:metal ion binding"/>
    <property type="evidence" value="ECO:0007669"/>
    <property type="project" value="UniProtKB-KW"/>
</dbReference>
<dbReference type="GO" id="GO:0140114">
    <property type="term" value="P:cellular detoxification of fluoride"/>
    <property type="evidence" value="ECO:0007669"/>
    <property type="project" value="UniProtKB-UniRule"/>
</dbReference>
<dbReference type="HAMAP" id="MF_00454">
    <property type="entry name" value="FluC"/>
    <property type="match status" value="1"/>
</dbReference>
<dbReference type="InterPro" id="IPR003691">
    <property type="entry name" value="FluC"/>
</dbReference>
<dbReference type="NCBIfam" id="TIGR00494">
    <property type="entry name" value="crcB"/>
    <property type="match status" value="1"/>
</dbReference>
<dbReference type="PANTHER" id="PTHR28259">
    <property type="entry name" value="FLUORIDE EXPORT PROTEIN 1-RELATED"/>
    <property type="match status" value="1"/>
</dbReference>
<dbReference type="PANTHER" id="PTHR28259:SF1">
    <property type="entry name" value="FLUORIDE EXPORT PROTEIN 1-RELATED"/>
    <property type="match status" value="1"/>
</dbReference>
<dbReference type="Pfam" id="PF02537">
    <property type="entry name" value="CRCB"/>
    <property type="match status" value="1"/>
</dbReference>